<dbReference type="EC" id="2.3.1.263" evidence="4"/>
<dbReference type="EMBL" id="CU695247">
    <property type="protein sequence ID" value="CAQ42979.1"/>
    <property type="molecule type" value="Genomic_DNA"/>
</dbReference>
<dbReference type="KEGG" id="ag:CAQ42979"/>
<dbReference type="BioCyc" id="MetaCyc:AKPTHIOLST-MONOMER"/>
<dbReference type="BRENDA" id="2.3.1.263">
    <property type="organism ID" value="1522"/>
</dbReference>
<dbReference type="GO" id="GO:0016740">
    <property type="term" value="F:transferase activity"/>
    <property type="evidence" value="ECO:0007669"/>
    <property type="project" value="UniProtKB-KW"/>
</dbReference>
<dbReference type="GO" id="GO:0006591">
    <property type="term" value="P:ornithine metabolic process"/>
    <property type="evidence" value="ECO:0000304"/>
    <property type="project" value="UniProtKB"/>
</dbReference>
<dbReference type="InterPro" id="IPR047755">
    <property type="entry name" value="OrtA"/>
</dbReference>
<dbReference type="NCBIfam" id="NF040739">
    <property type="entry name" value="ornith_OrtA"/>
    <property type="match status" value="1"/>
</dbReference>
<dbReference type="Pfam" id="PF22010">
    <property type="entry name" value="OrtA"/>
    <property type="match status" value="1"/>
</dbReference>
<name>ORTA_UNKP</name>
<comment type="function">
    <text evidence="1">Involved in the ornithine fermentation pathway. Catalyzes the thiolytic cleavage of 2-amino-4-ketopentanoate (AKP) with coenzyme A (CoA) to form acetyl-CoA and alanine. It is strictly specific for AKP.</text>
</comment>
<comment type="catalytic activity">
    <reaction evidence="4">
        <text>D-alanine + acetyl-CoA = (2R)-2-amino-4-oxopentanoate + CoA</text>
        <dbReference type="Rhea" id="RHEA:51436"/>
        <dbReference type="ChEBI" id="CHEBI:57287"/>
        <dbReference type="ChEBI" id="CHEBI:57288"/>
        <dbReference type="ChEBI" id="CHEBI:57416"/>
        <dbReference type="ChEBI" id="CHEBI:134102"/>
        <dbReference type="EC" id="2.3.1.263"/>
    </reaction>
</comment>
<comment type="biophysicochemical properties">
    <kinetics>
        <KM evidence="1">18 uM for CoA</KM>
        <KM evidence="1">35 uM for AKP</KM>
        <text evidence="1">kcat is 3.5 sec(-1) for CoA as substrate. kcat is 3.4 sec(-1) for AKP as substrate.</text>
    </kinetics>
</comment>
<comment type="subunit">
    <text evidence="1">Heterodimer with OrtB.</text>
</comment>
<comment type="similarity">
    <text evidence="3">Belongs to the OrtA family.</text>
</comment>
<proteinExistence type="evidence at protein level"/>
<sequence length="101" mass="11492">MSEKCKKDDWVEIHYVVLEARERTGDIPEDTRKVPLECWIKGWAEKEGTVGEEVTIRTPANRYVKGTLTRINPEYTHTFGPCASELSAIGQELRATLKEGK</sequence>
<evidence type="ECO:0000269" key="1">
    <source>
    </source>
</evidence>
<evidence type="ECO:0000303" key="2">
    <source>
    </source>
</evidence>
<evidence type="ECO:0000305" key="3"/>
<evidence type="ECO:0000305" key="4">
    <source>
    </source>
</evidence>
<evidence type="ECO:0000312" key="5">
    <source>
        <dbReference type="EMBL" id="CAQ42979.1"/>
    </source>
</evidence>
<feature type="chain" id="PRO_0000438117" description="2-amino-4-ketopentanoate thiolase alpha subunit">
    <location>
        <begin position="1"/>
        <end position="101"/>
    </location>
</feature>
<gene>
    <name evidence="2" type="primary">ortA</name>
    <name evidence="5" type="ORF">DIG-28672_34</name>
</gene>
<reference key="1">
    <citation type="submission" date="2008-04" db="EMBL/GenBank/DDBJ databases">
        <authorList>
            <consortium name="Genoscope - CEA"/>
        </authorList>
    </citation>
    <scope>NUCLEOTIDE SEQUENCE [GENOMIC DNA]</scope>
</reference>
<reference key="2">
    <citation type="journal article" date="2009" name="J. Bacteriol.">
        <title>A conserved gene cluster rules anaerobic oxidative degradation of L-ornithine.</title>
        <authorList>
            <person name="Fonknechten N."/>
            <person name="Perret A."/>
            <person name="Perchat N."/>
            <person name="Tricot S."/>
            <person name="Lechaplais C."/>
            <person name="Vallenet D."/>
            <person name="Vergne C."/>
            <person name="Zaparucha A."/>
            <person name="Le Paslier D."/>
            <person name="Weissenbach J."/>
            <person name="Salanoubat M."/>
        </authorList>
    </citation>
    <scope>NUCLEOTIDE SEQUENCE [GENOMIC DNA]</scope>
    <scope>FUNCTION</scope>
    <scope>CATALYTIC ACTIVITY</scope>
    <scope>BIOPHYSICOCHEMICAL PROPERTIES</scope>
    <scope>SUBSTRATE SPECIFICITY</scope>
    <scope>SUBUNIT</scope>
</reference>
<accession>C1FW06</accession>
<organism>
    <name type="scientific">Unknown prokaryotic organism</name>
    <dbReference type="NCBI Taxonomy" id="2725"/>
    <lineage>
        <taxon>Bacteria</taxon>
        <taxon>environmental samples</taxon>
    </lineage>
</organism>
<keyword id="KW-0808">Transferase</keyword>
<protein>
    <recommendedName>
        <fullName evidence="2">2-amino-4-ketopentanoate thiolase alpha subunit</fullName>
        <ecNumber evidence="4">2.3.1.263</ecNumber>
    </recommendedName>
    <alternativeName>
        <fullName evidence="2">AKP thiolase</fullName>
        <shortName evidence="2">AKPT</shortName>
    </alternativeName>
</protein>